<comment type="function">
    <text evidence="1">Cell wall formation.</text>
</comment>
<comment type="catalytic activity">
    <reaction evidence="1">
        <text>UDP-N-acetyl-alpha-D-muramate + L-alanine + ATP = UDP-N-acetyl-alpha-D-muramoyl-L-alanine + ADP + phosphate + H(+)</text>
        <dbReference type="Rhea" id="RHEA:23372"/>
        <dbReference type="ChEBI" id="CHEBI:15378"/>
        <dbReference type="ChEBI" id="CHEBI:30616"/>
        <dbReference type="ChEBI" id="CHEBI:43474"/>
        <dbReference type="ChEBI" id="CHEBI:57972"/>
        <dbReference type="ChEBI" id="CHEBI:70757"/>
        <dbReference type="ChEBI" id="CHEBI:83898"/>
        <dbReference type="ChEBI" id="CHEBI:456216"/>
        <dbReference type="EC" id="6.3.2.8"/>
    </reaction>
</comment>
<comment type="pathway">
    <text evidence="1">Cell wall biogenesis; peptidoglycan biosynthesis.</text>
</comment>
<comment type="subcellular location">
    <subcellularLocation>
        <location evidence="1">Cytoplasm</location>
    </subcellularLocation>
</comment>
<comment type="similarity">
    <text evidence="1">Belongs to the MurCDEF family.</text>
</comment>
<feature type="chain" id="PRO_1000091093" description="UDP-N-acetylmuramate--L-alanine ligase">
    <location>
        <begin position="1"/>
        <end position="487"/>
    </location>
</feature>
<feature type="binding site" evidence="1">
    <location>
        <begin position="122"/>
        <end position="128"/>
    </location>
    <ligand>
        <name>ATP</name>
        <dbReference type="ChEBI" id="CHEBI:30616"/>
    </ligand>
</feature>
<reference key="1">
    <citation type="journal article" date="2008" name="J. Biotechnol.">
        <title>The lifestyle of Corynebacterium urealyticum derived from its complete genome sequence established by pyrosequencing.</title>
        <authorList>
            <person name="Tauch A."/>
            <person name="Trost E."/>
            <person name="Tilker A."/>
            <person name="Ludewig U."/>
            <person name="Schneiker S."/>
            <person name="Goesmann A."/>
            <person name="Arnold W."/>
            <person name="Bekel T."/>
            <person name="Brinkrolf K."/>
            <person name="Brune I."/>
            <person name="Goetker S."/>
            <person name="Kalinowski J."/>
            <person name="Kamp P.-B."/>
            <person name="Lobo F.P."/>
            <person name="Viehoever P."/>
            <person name="Weisshaar B."/>
            <person name="Soriano F."/>
            <person name="Droege M."/>
            <person name="Puehler A."/>
        </authorList>
    </citation>
    <scope>NUCLEOTIDE SEQUENCE [LARGE SCALE GENOMIC DNA]</scope>
    <source>
        <strain>ATCC 43042 / DSM 7109</strain>
    </source>
</reference>
<gene>
    <name evidence="1" type="primary">murC</name>
    <name type="ordered locus">cu1204</name>
</gene>
<evidence type="ECO:0000255" key="1">
    <source>
        <dbReference type="HAMAP-Rule" id="MF_00046"/>
    </source>
</evidence>
<protein>
    <recommendedName>
        <fullName evidence="1">UDP-N-acetylmuramate--L-alanine ligase</fullName>
        <ecNumber evidence="1">6.3.2.8</ecNumber>
    </recommendedName>
    <alternativeName>
        <fullName evidence="1">UDP-N-acetylmuramoyl-L-alanine synthetase</fullName>
    </alternativeName>
</protein>
<proteinExistence type="inferred from homology"/>
<keyword id="KW-0067">ATP-binding</keyword>
<keyword id="KW-0131">Cell cycle</keyword>
<keyword id="KW-0132">Cell division</keyword>
<keyword id="KW-0133">Cell shape</keyword>
<keyword id="KW-0961">Cell wall biogenesis/degradation</keyword>
<keyword id="KW-0963">Cytoplasm</keyword>
<keyword id="KW-0436">Ligase</keyword>
<keyword id="KW-0547">Nucleotide-binding</keyword>
<keyword id="KW-0573">Peptidoglycan synthesis</keyword>
<keyword id="KW-1185">Reference proteome</keyword>
<accession>B1VHC3</accession>
<organism>
    <name type="scientific">Corynebacterium urealyticum (strain ATCC 43042 / DSM 7109)</name>
    <dbReference type="NCBI Taxonomy" id="504474"/>
    <lineage>
        <taxon>Bacteria</taxon>
        <taxon>Bacillati</taxon>
        <taxon>Actinomycetota</taxon>
        <taxon>Actinomycetes</taxon>
        <taxon>Mycobacteriales</taxon>
        <taxon>Corynebacteriaceae</taxon>
        <taxon>Corynebacterium</taxon>
    </lineage>
</organism>
<name>MURC_CORU7</name>
<sequence length="487" mass="51081">MTTQPEQIDLSRTHMVGIGGAGMSGIARILLARGYSVTGSDMKDSRSVLALRAAGAEVAIGHDAANVTGGAELPTVVVTSFAAIPKDNPELTAAREAGIPIVRRSDVLAELMSDRRAFLLAGTHGKTSTTSMAVVGVQAAGLDPSFAIGGQLNRAGTNAHHGTGEIFIAEADESDGSFLSYSPEVAVITNIEPDHLDYYGTEEAYVAIFDEFATKVTPGGYLVCCLDDPGAAALAARVRAAGTAPTVLGYGSRAAADQHPDIPAAAIIEEMIPDARGTAAKVRFNLPGQEERYEDIRVAIPGAHMTLNGVAAITGGALLGADLEKVIAGVADFDGVRRRFEYHGEAGGVRVYDDYAHHPTEVTAVLTAAKELVEATDAGRIIAVFQPHLYSRTMNFASEFARALSLADEVVLLDIFGAREQPVEGVDSRIIGEKLTCEWHFQPDFSAVAEQVIGIAKPGDVVLTIGAGTVTMLADEILRCGREAQGE</sequence>
<dbReference type="EC" id="6.3.2.8" evidence="1"/>
<dbReference type="EMBL" id="AM942444">
    <property type="protein sequence ID" value="CAQ05164.1"/>
    <property type="molecule type" value="Genomic_DNA"/>
</dbReference>
<dbReference type="RefSeq" id="WP_012360452.1">
    <property type="nucleotide sequence ID" value="NC_010545.1"/>
</dbReference>
<dbReference type="SMR" id="B1VHC3"/>
<dbReference type="STRING" id="504474.cu1204"/>
<dbReference type="GeneID" id="60603985"/>
<dbReference type="KEGG" id="cur:cu1204"/>
<dbReference type="eggNOG" id="COG0773">
    <property type="taxonomic scope" value="Bacteria"/>
</dbReference>
<dbReference type="HOGENOM" id="CLU_028104_2_2_11"/>
<dbReference type="UniPathway" id="UPA00219"/>
<dbReference type="Proteomes" id="UP000001727">
    <property type="component" value="Chromosome"/>
</dbReference>
<dbReference type="GO" id="GO:0005737">
    <property type="term" value="C:cytoplasm"/>
    <property type="evidence" value="ECO:0007669"/>
    <property type="project" value="UniProtKB-SubCell"/>
</dbReference>
<dbReference type="GO" id="GO:0005524">
    <property type="term" value="F:ATP binding"/>
    <property type="evidence" value="ECO:0007669"/>
    <property type="project" value="UniProtKB-UniRule"/>
</dbReference>
<dbReference type="GO" id="GO:0008763">
    <property type="term" value="F:UDP-N-acetylmuramate-L-alanine ligase activity"/>
    <property type="evidence" value="ECO:0007669"/>
    <property type="project" value="UniProtKB-UniRule"/>
</dbReference>
<dbReference type="GO" id="GO:0051301">
    <property type="term" value="P:cell division"/>
    <property type="evidence" value="ECO:0007669"/>
    <property type="project" value="UniProtKB-KW"/>
</dbReference>
<dbReference type="GO" id="GO:0071555">
    <property type="term" value="P:cell wall organization"/>
    <property type="evidence" value="ECO:0007669"/>
    <property type="project" value="UniProtKB-KW"/>
</dbReference>
<dbReference type="GO" id="GO:0009252">
    <property type="term" value="P:peptidoglycan biosynthetic process"/>
    <property type="evidence" value="ECO:0007669"/>
    <property type="project" value="UniProtKB-UniRule"/>
</dbReference>
<dbReference type="GO" id="GO:0008360">
    <property type="term" value="P:regulation of cell shape"/>
    <property type="evidence" value="ECO:0007669"/>
    <property type="project" value="UniProtKB-KW"/>
</dbReference>
<dbReference type="Gene3D" id="3.90.190.20">
    <property type="entry name" value="Mur ligase, C-terminal domain"/>
    <property type="match status" value="1"/>
</dbReference>
<dbReference type="Gene3D" id="3.40.1190.10">
    <property type="entry name" value="Mur-like, catalytic domain"/>
    <property type="match status" value="1"/>
</dbReference>
<dbReference type="Gene3D" id="3.40.50.720">
    <property type="entry name" value="NAD(P)-binding Rossmann-like Domain"/>
    <property type="match status" value="1"/>
</dbReference>
<dbReference type="HAMAP" id="MF_00046">
    <property type="entry name" value="MurC"/>
    <property type="match status" value="1"/>
</dbReference>
<dbReference type="InterPro" id="IPR036565">
    <property type="entry name" value="Mur-like_cat_sf"/>
</dbReference>
<dbReference type="InterPro" id="IPR004101">
    <property type="entry name" value="Mur_ligase_C"/>
</dbReference>
<dbReference type="InterPro" id="IPR036615">
    <property type="entry name" value="Mur_ligase_C_dom_sf"/>
</dbReference>
<dbReference type="InterPro" id="IPR013221">
    <property type="entry name" value="Mur_ligase_cen"/>
</dbReference>
<dbReference type="InterPro" id="IPR000713">
    <property type="entry name" value="Mur_ligase_N"/>
</dbReference>
<dbReference type="InterPro" id="IPR050061">
    <property type="entry name" value="MurCDEF_pg_biosynth"/>
</dbReference>
<dbReference type="InterPro" id="IPR005758">
    <property type="entry name" value="UDP-N-AcMur_Ala_ligase_MurC"/>
</dbReference>
<dbReference type="NCBIfam" id="TIGR01082">
    <property type="entry name" value="murC"/>
    <property type="match status" value="1"/>
</dbReference>
<dbReference type="PANTHER" id="PTHR43445:SF3">
    <property type="entry name" value="UDP-N-ACETYLMURAMATE--L-ALANINE LIGASE"/>
    <property type="match status" value="1"/>
</dbReference>
<dbReference type="PANTHER" id="PTHR43445">
    <property type="entry name" value="UDP-N-ACETYLMURAMATE--L-ALANINE LIGASE-RELATED"/>
    <property type="match status" value="1"/>
</dbReference>
<dbReference type="Pfam" id="PF01225">
    <property type="entry name" value="Mur_ligase"/>
    <property type="match status" value="1"/>
</dbReference>
<dbReference type="Pfam" id="PF02875">
    <property type="entry name" value="Mur_ligase_C"/>
    <property type="match status" value="1"/>
</dbReference>
<dbReference type="Pfam" id="PF08245">
    <property type="entry name" value="Mur_ligase_M"/>
    <property type="match status" value="1"/>
</dbReference>
<dbReference type="SUPFAM" id="SSF51984">
    <property type="entry name" value="MurCD N-terminal domain"/>
    <property type="match status" value="1"/>
</dbReference>
<dbReference type="SUPFAM" id="SSF53623">
    <property type="entry name" value="MurD-like peptide ligases, catalytic domain"/>
    <property type="match status" value="1"/>
</dbReference>
<dbReference type="SUPFAM" id="SSF53244">
    <property type="entry name" value="MurD-like peptide ligases, peptide-binding domain"/>
    <property type="match status" value="1"/>
</dbReference>